<evidence type="ECO:0000250" key="1">
    <source>
        <dbReference type="UniProtKB" id="P21952"/>
    </source>
</evidence>
<evidence type="ECO:0000255" key="2">
    <source>
        <dbReference type="PROSITE-ProRule" id="PRU00108"/>
    </source>
</evidence>
<evidence type="ECO:0000255" key="3">
    <source>
        <dbReference type="PROSITE-ProRule" id="PRU00530"/>
    </source>
</evidence>
<evidence type="ECO:0000256" key="4">
    <source>
        <dbReference type="SAM" id="MobiDB-lite"/>
    </source>
</evidence>
<evidence type="ECO:0000269" key="5">
    <source>
    </source>
</evidence>
<evidence type="ECO:0000305" key="6"/>
<accession>P31363</accession>
<accession>P20915</accession>
<accession>Q7ZYC6</accession>
<feature type="chain" id="PRO_0000100764" description="POU domain, class 3, transcription factor 1-A">
    <location>
        <begin position="1"/>
        <end position="375"/>
    </location>
</feature>
<feature type="domain" description="POU-specific" evidence="3">
    <location>
        <begin position="194"/>
        <end position="268"/>
    </location>
</feature>
<feature type="DNA-binding region" description="Homeobox" evidence="2">
    <location>
        <begin position="286"/>
        <end position="345"/>
    </location>
</feature>
<feature type="region of interest" description="Disordered" evidence="4">
    <location>
        <begin position="1"/>
        <end position="29"/>
    </location>
</feature>
<feature type="region of interest" description="Disordered" evidence="4">
    <location>
        <begin position="67"/>
        <end position="138"/>
    </location>
</feature>
<feature type="region of interest" description="Disordered" evidence="4">
    <location>
        <begin position="151"/>
        <end position="200"/>
    </location>
</feature>
<feature type="compositionally biased region" description="Polar residues" evidence="4">
    <location>
        <begin position="107"/>
        <end position="117"/>
    </location>
</feature>
<feature type="compositionally biased region" description="Polar residues" evidence="4">
    <location>
        <begin position="129"/>
        <end position="138"/>
    </location>
</feature>
<feature type="compositionally biased region" description="Polar residues" evidence="4">
    <location>
        <begin position="151"/>
        <end position="160"/>
    </location>
</feature>
<feature type="compositionally biased region" description="Basic and acidic residues" evidence="4">
    <location>
        <begin position="162"/>
        <end position="177"/>
    </location>
</feature>
<feature type="sequence conflict" description="In Ref. 2; CAA41782." evidence="6" ref="2">
    <original>YLPR</original>
    <variation>LLPW</variation>
    <location>
        <begin position="7"/>
        <end position="10"/>
    </location>
</feature>
<reference key="1">
    <citation type="submission" date="2003-01" db="EMBL/GenBank/DDBJ databases">
        <authorList>
            <consortium name="NIH - Xenopus Gene Collection (XGC) project"/>
        </authorList>
    </citation>
    <scope>NUCLEOTIDE SEQUENCE [LARGE SCALE MRNA]</scope>
    <source>
        <tissue>Neurula</tissue>
    </source>
</reference>
<reference key="2">
    <citation type="journal article" date="1991" name="Dev. Biol.">
        <title>XLPOU 1 and XLPOU 2, two novel POU domain genes expressed in the dorsoanterior region of Xenopus embryos.</title>
        <authorList>
            <person name="Agarwal V.R."/>
            <person name="Sato S.M."/>
        </authorList>
    </citation>
    <scope>NUCLEOTIDE SEQUENCE [MRNA] OF 7-375</scope>
    <scope>PUTATIVE FUNCTION</scope>
    <scope>TISSUE SPECIFICITY</scope>
    <scope>DEVELOPMENTAL STAGE</scope>
    <source>
        <tissue>Brain</tissue>
    </source>
</reference>
<reference key="3">
    <citation type="journal article" date="1990" name="Nucleic Acids Res.">
        <title>Cloning and sequencing of POU-boxes expressed in Xenopus laevis neurula embryos.</title>
        <authorList>
            <person name="Baltzinger M."/>
            <person name="Stiegler P."/>
            <person name="Remy P."/>
        </authorList>
    </citation>
    <scope>NUCLEOTIDE SEQUENCE [MRNA] OF 220-324</scope>
    <source>
        <tissue>Neurula</tissue>
    </source>
</reference>
<organism>
    <name type="scientific">Xenopus laevis</name>
    <name type="common">African clawed frog</name>
    <dbReference type="NCBI Taxonomy" id="8355"/>
    <lineage>
        <taxon>Eukaryota</taxon>
        <taxon>Metazoa</taxon>
        <taxon>Chordata</taxon>
        <taxon>Craniata</taxon>
        <taxon>Vertebrata</taxon>
        <taxon>Euteleostomi</taxon>
        <taxon>Amphibia</taxon>
        <taxon>Batrachia</taxon>
        <taxon>Anura</taxon>
        <taxon>Pipoidea</taxon>
        <taxon>Pipidae</taxon>
        <taxon>Xenopodinae</taxon>
        <taxon>Xenopus</taxon>
        <taxon>Xenopus</taxon>
    </lineage>
</organism>
<proteinExistence type="evidence at transcript level"/>
<keyword id="KW-0217">Developmental protein</keyword>
<keyword id="KW-0238">DNA-binding</keyword>
<keyword id="KW-0371">Homeobox</keyword>
<keyword id="KW-0524">Neurogenesis</keyword>
<keyword id="KW-0539">Nucleus</keyword>
<keyword id="KW-1185">Reference proteome</keyword>
<keyword id="KW-0804">Transcription</keyword>
<keyword id="KW-0805">Transcription regulation</keyword>
<dbReference type="EMBL" id="BC043847">
    <property type="protein sequence ID" value="AAH43847.1"/>
    <property type="status" value="ALT_INIT"/>
    <property type="molecule type" value="mRNA"/>
</dbReference>
<dbReference type="EMBL" id="X59056">
    <property type="protein sequence ID" value="CAA41782.1"/>
    <property type="status" value="ALT_INIT"/>
    <property type="molecule type" value="mRNA"/>
</dbReference>
<dbReference type="EMBL" id="X54682">
    <property type="protein sequence ID" value="CAA38496.1"/>
    <property type="molecule type" value="mRNA"/>
</dbReference>
<dbReference type="PIR" id="S12183">
    <property type="entry name" value="S12183"/>
</dbReference>
<dbReference type="PIR" id="S23248">
    <property type="entry name" value="S23248"/>
</dbReference>
<dbReference type="RefSeq" id="NP_001158054.1">
    <property type="nucleotide sequence ID" value="NM_001164582.2"/>
</dbReference>
<dbReference type="SMR" id="P31363"/>
<dbReference type="GeneID" id="394338"/>
<dbReference type="KEGG" id="xla:394338"/>
<dbReference type="CTD" id="394338"/>
<dbReference type="OrthoDB" id="6358449at2759"/>
<dbReference type="Proteomes" id="UP000186698">
    <property type="component" value="Chromosome 2S"/>
</dbReference>
<dbReference type="Bgee" id="394338">
    <property type="expression patterns" value="Expressed in zone of skin and 6 other cell types or tissues"/>
</dbReference>
<dbReference type="GO" id="GO:0005634">
    <property type="term" value="C:nucleus"/>
    <property type="evidence" value="ECO:0007669"/>
    <property type="project" value="UniProtKB-SubCell"/>
</dbReference>
<dbReference type="GO" id="GO:0000981">
    <property type="term" value="F:DNA-binding transcription factor activity, RNA polymerase II-specific"/>
    <property type="evidence" value="ECO:0000318"/>
    <property type="project" value="GO_Central"/>
</dbReference>
<dbReference type="GO" id="GO:0000978">
    <property type="term" value="F:RNA polymerase II cis-regulatory region sequence-specific DNA binding"/>
    <property type="evidence" value="ECO:0000318"/>
    <property type="project" value="GO_Central"/>
</dbReference>
<dbReference type="GO" id="GO:0007420">
    <property type="term" value="P:brain development"/>
    <property type="evidence" value="ECO:0007669"/>
    <property type="project" value="InterPro"/>
</dbReference>
<dbReference type="GO" id="GO:0006357">
    <property type="term" value="P:regulation of transcription by RNA polymerase II"/>
    <property type="evidence" value="ECO:0000318"/>
    <property type="project" value="GO_Central"/>
</dbReference>
<dbReference type="CDD" id="cd00086">
    <property type="entry name" value="homeodomain"/>
    <property type="match status" value="1"/>
</dbReference>
<dbReference type="FunFam" id="1.10.10.60:FF:000005">
    <property type="entry name" value="POU domain protein"/>
    <property type="match status" value="1"/>
</dbReference>
<dbReference type="FunFam" id="1.10.260.40:FF:000001">
    <property type="entry name" value="POU domain protein"/>
    <property type="match status" value="1"/>
</dbReference>
<dbReference type="Gene3D" id="1.10.10.60">
    <property type="entry name" value="Homeodomain-like"/>
    <property type="match status" value="1"/>
</dbReference>
<dbReference type="Gene3D" id="1.10.260.40">
    <property type="entry name" value="lambda repressor-like DNA-binding domains"/>
    <property type="match status" value="1"/>
</dbReference>
<dbReference type="InterPro" id="IPR001356">
    <property type="entry name" value="HD"/>
</dbReference>
<dbReference type="InterPro" id="IPR017970">
    <property type="entry name" value="Homeobox_CS"/>
</dbReference>
<dbReference type="InterPro" id="IPR009057">
    <property type="entry name" value="Homeodomain-like_sf"/>
</dbReference>
<dbReference type="InterPro" id="IPR010982">
    <property type="entry name" value="Lambda_DNA-bd_dom_sf"/>
</dbReference>
<dbReference type="InterPro" id="IPR013847">
    <property type="entry name" value="POU"/>
</dbReference>
<dbReference type="InterPro" id="IPR000327">
    <property type="entry name" value="POU_dom"/>
</dbReference>
<dbReference type="InterPro" id="IPR050255">
    <property type="entry name" value="POU_domain_TF"/>
</dbReference>
<dbReference type="InterPro" id="IPR016362">
    <property type="entry name" value="TF_POU_3"/>
</dbReference>
<dbReference type="PANTHER" id="PTHR11636">
    <property type="entry name" value="POU DOMAIN"/>
    <property type="match status" value="1"/>
</dbReference>
<dbReference type="PANTHER" id="PTHR11636:SF75">
    <property type="entry name" value="POU DOMAIN, CLASS 3, TRANSCRIPTION FACTOR 1"/>
    <property type="match status" value="1"/>
</dbReference>
<dbReference type="Pfam" id="PF00046">
    <property type="entry name" value="Homeodomain"/>
    <property type="match status" value="1"/>
</dbReference>
<dbReference type="Pfam" id="PF00157">
    <property type="entry name" value="Pou"/>
    <property type="match status" value="1"/>
</dbReference>
<dbReference type="PIRSF" id="PIRSF002629">
    <property type="entry name" value="Transcription_factor_POU"/>
    <property type="match status" value="1"/>
</dbReference>
<dbReference type="PRINTS" id="PR00028">
    <property type="entry name" value="POUDOMAIN"/>
</dbReference>
<dbReference type="SMART" id="SM00389">
    <property type="entry name" value="HOX"/>
    <property type="match status" value="1"/>
</dbReference>
<dbReference type="SMART" id="SM00352">
    <property type="entry name" value="POU"/>
    <property type="match status" value="1"/>
</dbReference>
<dbReference type="SUPFAM" id="SSF46689">
    <property type="entry name" value="Homeodomain-like"/>
    <property type="match status" value="1"/>
</dbReference>
<dbReference type="SUPFAM" id="SSF47413">
    <property type="entry name" value="lambda repressor-like DNA-binding domains"/>
    <property type="match status" value="1"/>
</dbReference>
<dbReference type="PROSITE" id="PS00027">
    <property type="entry name" value="HOMEOBOX_1"/>
    <property type="match status" value="1"/>
</dbReference>
<dbReference type="PROSITE" id="PS50071">
    <property type="entry name" value="HOMEOBOX_2"/>
    <property type="match status" value="1"/>
</dbReference>
<dbReference type="PROSITE" id="PS00035">
    <property type="entry name" value="POU_1"/>
    <property type="match status" value="1"/>
</dbReference>
<dbReference type="PROSITE" id="PS00465">
    <property type="entry name" value="POU_2"/>
    <property type="match status" value="1"/>
</dbReference>
<dbReference type="PROSITE" id="PS51179">
    <property type="entry name" value="POU_3"/>
    <property type="match status" value="1"/>
</dbReference>
<protein>
    <recommendedName>
        <fullName>POU domain, class 3, transcription factor 1-A</fullName>
    </recommendedName>
    <alternativeName>
        <fullName>Homeotic protein NRL-22</fullName>
        <shortName>XlNRL-22</shortName>
    </alternativeName>
    <alternativeName>
        <fullName>Transcription factor POU1</fullName>
        <shortName>XlPOU 1</shortName>
        <shortName>XlPOU1</shortName>
    </alternativeName>
</protein>
<comment type="function">
    <text evidence="1 5">Acts as a transcription factor (By similarity). May play a role in neuronal differentiation (PubMed:1717323).</text>
</comment>
<comment type="subcellular location">
    <subcellularLocation>
        <location evidence="2 3">Nucleus</location>
    </subcellularLocation>
</comment>
<comment type="tissue specificity">
    <text evidence="5">In embryos at the neural fold stage, localized primarily in the anterior neural plate, and localized mostly in the anterior region of the nerve cord of neurula stage embryos. In tailbud stages, expressed predominantly in the eye and brain, with weak expression along the length of the nerve cord. In adults, expressed in skin and brain.</text>
</comment>
<comment type="developmental stage">
    <text evidence="5">Embryonic expression begins at the neural plate stage and continues throughout development to adulthood.</text>
</comment>
<comment type="similarity">
    <text evidence="6">Belongs to the POU transcription factor family. Class-3 subfamily.</text>
</comment>
<comment type="sequence caution" evidence="6">
    <conflict type="erroneous initiation">
        <sequence resource="EMBL-CDS" id="AAH43847"/>
    </conflict>
</comment>
<comment type="sequence caution" evidence="6">
    <conflict type="erroneous initiation">
        <sequence resource="EMBL-CDS" id="CAA41782"/>
    </conflict>
</comment>
<sequence length="375" mass="41846">MAATAQYLPRNNSLPSNPLMHPDSDRMHQGTTYREVQKMMHQEYLQGLATNAGHHMSLTPHQWLPNPASDWGSGSHLGVQAEHAKSGVQSNREDLSSGFHHHRSHLVHQQSPSSHAWAQSGGHHLAPMSPSSNSHQPLIYSQSSYTNLNGMLGPQASSLHHSMRDPLHDDPGVHDTQVDSPPQHLGHHQDHSDEDAPSSDDLEQFAKQFKQRRIKLGFTQADVGLALGTLYGNVFSQTTICRFEALQLSFKNMCKLKPLLNKWLEETDSTTGSPTNLDKIAAQGRKRKKRTSIEVGVKGALENHFLKCPKPSAHEITSLADSLQLEKEVVRVWFCNRRQKEKRMTPAGVPHPPMEDVYSQAETPPLHHTLQTSVQ</sequence>
<gene>
    <name type="primary">pou3f1-a</name>
    <name type="synonym">nrl-22</name>
    <name type="synonym">pou1</name>
    <name type="synonym">pou50</name>
</gene>
<name>P3F1A_XENLA</name>